<organism>
    <name type="scientific">Chlorobium luteolum (strain DSM 273 / BCRC 81028 / 2530)</name>
    <name type="common">Pelodictyon luteolum</name>
    <dbReference type="NCBI Taxonomy" id="319225"/>
    <lineage>
        <taxon>Bacteria</taxon>
        <taxon>Pseudomonadati</taxon>
        <taxon>Chlorobiota</taxon>
        <taxon>Chlorobiia</taxon>
        <taxon>Chlorobiales</taxon>
        <taxon>Chlorobiaceae</taxon>
        <taxon>Chlorobium/Pelodictyon group</taxon>
        <taxon>Pelodictyon</taxon>
    </lineage>
</organism>
<gene>
    <name evidence="1" type="primary">rpsO</name>
    <name type="ordered locus">Plut_1775</name>
</gene>
<protein>
    <recommendedName>
        <fullName evidence="1">Small ribosomal subunit protein uS15</fullName>
    </recommendedName>
    <alternativeName>
        <fullName evidence="2">30S ribosomal protein S15</fullName>
    </alternativeName>
</protein>
<comment type="function">
    <text evidence="1">One of the primary rRNA binding proteins, it binds directly to 16S rRNA where it helps nucleate assembly of the platform of the 30S subunit by binding and bridging several RNA helices of the 16S rRNA.</text>
</comment>
<comment type="function">
    <text evidence="1">Forms an intersubunit bridge (bridge B4) with the 23S rRNA of the 50S subunit in the ribosome.</text>
</comment>
<comment type="subunit">
    <text evidence="1">Part of the 30S ribosomal subunit. Forms a bridge to the 50S subunit in the 70S ribosome, contacting the 23S rRNA.</text>
</comment>
<comment type="similarity">
    <text evidence="1">Belongs to the universal ribosomal protein uS15 family.</text>
</comment>
<feature type="chain" id="PRO_0000255513" description="Small ribosomal subunit protein uS15">
    <location>
        <begin position="1"/>
        <end position="89"/>
    </location>
</feature>
<evidence type="ECO:0000255" key="1">
    <source>
        <dbReference type="HAMAP-Rule" id="MF_01343"/>
    </source>
</evidence>
<evidence type="ECO:0000305" key="2"/>
<reference key="1">
    <citation type="submission" date="2005-08" db="EMBL/GenBank/DDBJ databases">
        <title>Complete sequence of Pelodictyon luteolum DSM 273.</title>
        <authorList>
            <consortium name="US DOE Joint Genome Institute"/>
            <person name="Copeland A."/>
            <person name="Lucas S."/>
            <person name="Lapidus A."/>
            <person name="Barry K."/>
            <person name="Detter J.C."/>
            <person name="Glavina T."/>
            <person name="Hammon N."/>
            <person name="Israni S."/>
            <person name="Pitluck S."/>
            <person name="Bryant D."/>
            <person name="Schmutz J."/>
            <person name="Larimer F."/>
            <person name="Land M."/>
            <person name="Kyrpides N."/>
            <person name="Ivanova N."/>
            <person name="Richardson P."/>
        </authorList>
    </citation>
    <scope>NUCLEOTIDE SEQUENCE [LARGE SCALE GENOMIC DNA]</scope>
    <source>
        <strain>DSM 273 / BCRC 81028 / 2530</strain>
    </source>
</reference>
<sequence>MTLSKEHKAAVITQFGGNDKNTGKTEVQVALFSRRITELTGHLQQHPKDKHSRRGLLMIVGKRKKALKYLQQVNIARYRQVLADLDLRK</sequence>
<keyword id="KW-1185">Reference proteome</keyword>
<keyword id="KW-0687">Ribonucleoprotein</keyword>
<keyword id="KW-0689">Ribosomal protein</keyword>
<keyword id="KW-0694">RNA-binding</keyword>
<keyword id="KW-0699">rRNA-binding</keyword>
<name>RS15_CHLL3</name>
<proteinExistence type="inferred from homology"/>
<accession>Q3B202</accession>
<dbReference type="EMBL" id="CP000096">
    <property type="protein sequence ID" value="ABB24629.1"/>
    <property type="molecule type" value="Genomic_DNA"/>
</dbReference>
<dbReference type="RefSeq" id="WP_011358501.1">
    <property type="nucleotide sequence ID" value="NC_007512.1"/>
</dbReference>
<dbReference type="SMR" id="Q3B202"/>
<dbReference type="STRING" id="319225.Plut_1775"/>
<dbReference type="KEGG" id="plt:Plut_1775"/>
<dbReference type="eggNOG" id="COG0184">
    <property type="taxonomic scope" value="Bacteria"/>
</dbReference>
<dbReference type="HOGENOM" id="CLU_148518_0_1_10"/>
<dbReference type="OrthoDB" id="9799262at2"/>
<dbReference type="Proteomes" id="UP000002709">
    <property type="component" value="Chromosome"/>
</dbReference>
<dbReference type="GO" id="GO:0022627">
    <property type="term" value="C:cytosolic small ribosomal subunit"/>
    <property type="evidence" value="ECO:0007669"/>
    <property type="project" value="TreeGrafter"/>
</dbReference>
<dbReference type="GO" id="GO:0019843">
    <property type="term" value="F:rRNA binding"/>
    <property type="evidence" value="ECO:0007669"/>
    <property type="project" value="UniProtKB-UniRule"/>
</dbReference>
<dbReference type="GO" id="GO:0003735">
    <property type="term" value="F:structural constituent of ribosome"/>
    <property type="evidence" value="ECO:0007669"/>
    <property type="project" value="InterPro"/>
</dbReference>
<dbReference type="GO" id="GO:0006412">
    <property type="term" value="P:translation"/>
    <property type="evidence" value="ECO:0007669"/>
    <property type="project" value="UniProtKB-UniRule"/>
</dbReference>
<dbReference type="CDD" id="cd00353">
    <property type="entry name" value="Ribosomal_S15p_S13e"/>
    <property type="match status" value="1"/>
</dbReference>
<dbReference type="FunFam" id="1.10.287.10:FF:000002">
    <property type="entry name" value="30S ribosomal protein S15"/>
    <property type="match status" value="1"/>
</dbReference>
<dbReference type="Gene3D" id="6.10.250.3130">
    <property type="match status" value="1"/>
</dbReference>
<dbReference type="Gene3D" id="1.10.287.10">
    <property type="entry name" value="S15/NS1, RNA-binding"/>
    <property type="match status" value="1"/>
</dbReference>
<dbReference type="HAMAP" id="MF_01343_B">
    <property type="entry name" value="Ribosomal_uS15_B"/>
    <property type="match status" value="1"/>
</dbReference>
<dbReference type="InterPro" id="IPR000589">
    <property type="entry name" value="Ribosomal_uS15"/>
</dbReference>
<dbReference type="InterPro" id="IPR005290">
    <property type="entry name" value="Ribosomal_uS15_bac-type"/>
</dbReference>
<dbReference type="InterPro" id="IPR009068">
    <property type="entry name" value="uS15_NS1_RNA-bd_sf"/>
</dbReference>
<dbReference type="NCBIfam" id="TIGR00952">
    <property type="entry name" value="S15_bact"/>
    <property type="match status" value="1"/>
</dbReference>
<dbReference type="PANTHER" id="PTHR23321">
    <property type="entry name" value="RIBOSOMAL PROTEIN S15, BACTERIAL AND ORGANELLAR"/>
    <property type="match status" value="1"/>
</dbReference>
<dbReference type="PANTHER" id="PTHR23321:SF26">
    <property type="entry name" value="SMALL RIBOSOMAL SUBUNIT PROTEIN US15M"/>
    <property type="match status" value="1"/>
</dbReference>
<dbReference type="Pfam" id="PF00312">
    <property type="entry name" value="Ribosomal_S15"/>
    <property type="match status" value="1"/>
</dbReference>
<dbReference type="SMART" id="SM01387">
    <property type="entry name" value="Ribosomal_S15"/>
    <property type="match status" value="1"/>
</dbReference>
<dbReference type="SUPFAM" id="SSF47060">
    <property type="entry name" value="S15/NS1 RNA-binding domain"/>
    <property type="match status" value="1"/>
</dbReference>